<protein>
    <recommendedName>
        <fullName>Phosphoribosyl-ATP pyrophosphatase</fullName>
        <shortName>PRA-PH</shortName>
        <ecNumber>3.6.1.31</ecNumber>
    </recommendedName>
</protein>
<reference key="1">
    <citation type="journal article" date="1996" name="Microbiology">
        <title>Cloning of the Rhodobacter sphaeroides hisL gene: unifunctionality of the encoded protein and lack of linkage to other his genes.</title>
        <authorList>
            <person name="Oriol E."/>
            <person name="Mendez-Alvarez S."/>
            <person name="Barbe J."/>
            <person name="Gibert I."/>
        </authorList>
    </citation>
    <scope>NUCLEOTIDE SEQUENCE [GENOMIC DNA]</scope>
</reference>
<reference key="2">
    <citation type="submission" date="2005-09" db="EMBL/GenBank/DDBJ databases">
        <title>Complete sequence of chromosome 1 of Rhodobacter sphaeroides 2.4.1.</title>
        <authorList>
            <person name="Copeland A."/>
            <person name="Lucas S."/>
            <person name="Lapidus A."/>
            <person name="Barry K."/>
            <person name="Detter J.C."/>
            <person name="Glavina T."/>
            <person name="Hammon N."/>
            <person name="Israni S."/>
            <person name="Pitluck S."/>
            <person name="Richardson P."/>
            <person name="Mackenzie C."/>
            <person name="Choudhary M."/>
            <person name="Larimer F."/>
            <person name="Hauser L.J."/>
            <person name="Land M."/>
            <person name="Donohue T.J."/>
            <person name="Kaplan S."/>
        </authorList>
    </citation>
    <scope>NUCLEOTIDE SEQUENCE [LARGE SCALE GENOMIC DNA]</scope>
    <source>
        <strain>ATCC 17023 / DSM 158 / JCM 6121 / CCUG 31486 / LMG 2827 / NBRC 12203 / NCIMB 8253 / ATH 2.4.1.</strain>
    </source>
</reference>
<accession>P50935</accession>
<accession>Q3J488</accession>
<feature type="chain" id="PRO_0000136386" description="Phosphoribosyl-ATP pyrophosphatase">
    <location>
        <begin position="1"/>
        <end position="103"/>
    </location>
</feature>
<feature type="sequence conflict" description="In Ref. 1." evidence="2" ref="1">
    <original>R</original>
    <variation>P</variation>
    <location>
        <position position="102"/>
    </location>
</feature>
<keyword id="KW-0028">Amino-acid biosynthesis</keyword>
<keyword id="KW-0067">ATP-binding</keyword>
<keyword id="KW-0963">Cytoplasm</keyword>
<keyword id="KW-0368">Histidine biosynthesis</keyword>
<keyword id="KW-0378">Hydrolase</keyword>
<keyword id="KW-0547">Nucleotide-binding</keyword>
<keyword id="KW-1185">Reference proteome</keyword>
<gene>
    <name type="primary">hisE</name>
    <name type="ordered locus">RHOS4_08280</name>
    <name type="ORF">RSP_2241</name>
</gene>
<comment type="catalytic activity">
    <reaction>
        <text>1-(5-phospho-beta-D-ribosyl)-ATP + H2O = 1-(5-phospho-beta-D-ribosyl)-5'-AMP + diphosphate + H(+)</text>
        <dbReference type="Rhea" id="RHEA:22828"/>
        <dbReference type="ChEBI" id="CHEBI:15377"/>
        <dbReference type="ChEBI" id="CHEBI:15378"/>
        <dbReference type="ChEBI" id="CHEBI:33019"/>
        <dbReference type="ChEBI" id="CHEBI:59457"/>
        <dbReference type="ChEBI" id="CHEBI:73183"/>
        <dbReference type="EC" id="3.6.1.31"/>
    </reaction>
</comment>
<comment type="pathway">
    <text>Amino-acid biosynthesis; L-histidine biosynthesis; L-histidine from 5-phospho-alpha-D-ribose 1-diphosphate: step 2/9.</text>
</comment>
<comment type="subcellular location">
    <subcellularLocation>
        <location evidence="1">Cytoplasm</location>
    </subcellularLocation>
</comment>
<comment type="similarity">
    <text evidence="2">Belongs to the PRA-PH family.</text>
</comment>
<dbReference type="EC" id="3.6.1.31"/>
<dbReference type="EMBL" id="X87256">
    <property type="protein sequence ID" value="CAA60711.1"/>
    <property type="molecule type" value="Genomic_DNA"/>
</dbReference>
<dbReference type="EMBL" id="CP000143">
    <property type="protein sequence ID" value="ABA78396.1"/>
    <property type="molecule type" value="Genomic_DNA"/>
</dbReference>
<dbReference type="PIR" id="S54839">
    <property type="entry name" value="S54839"/>
</dbReference>
<dbReference type="RefSeq" id="WP_011337341.1">
    <property type="nucleotide sequence ID" value="NZ_CP030271.1"/>
</dbReference>
<dbReference type="RefSeq" id="YP_352297.1">
    <property type="nucleotide sequence ID" value="NC_007493.2"/>
</dbReference>
<dbReference type="SMR" id="P50935"/>
<dbReference type="STRING" id="272943.RSP_2241"/>
<dbReference type="EnsemblBacteria" id="ABA78396">
    <property type="protein sequence ID" value="ABA78396"/>
    <property type="gene ID" value="RSP_2241"/>
</dbReference>
<dbReference type="GeneID" id="3719771"/>
<dbReference type="KEGG" id="rsp:RSP_2241"/>
<dbReference type="PATRIC" id="fig|272943.9.peg.1144"/>
<dbReference type="eggNOG" id="COG0140">
    <property type="taxonomic scope" value="Bacteria"/>
</dbReference>
<dbReference type="OrthoDB" id="9814738at2"/>
<dbReference type="PhylomeDB" id="P50935"/>
<dbReference type="UniPathway" id="UPA00031">
    <property type="reaction ID" value="UER00007"/>
</dbReference>
<dbReference type="Proteomes" id="UP000002703">
    <property type="component" value="Chromosome 1"/>
</dbReference>
<dbReference type="GO" id="GO:0005737">
    <property type="term" value="C:cytoplasm"/>
    <property type="evidence" value="ECO:0007669"/>
    <property type="project" value="UniProtKB-SubCell"/>
</dbReference>
<dbReference type="GO" id="GO:0005524">
    <property type="term" value="F:ATP binding"/>
    <property type="evidence" value="ECO:0007669"/>
    <property type="project" value="UniProtKB-KW"/>
</dbReference>
<dbReference type="GO" id="GO:0004636">
    <property type="term" value="F:phosphoribosyl-ATP diphosphatase activity"/>
    <property type="evidence" value="ECO:0007669"/>
    <property type="project" value="UniProtKB-UniRule"/>
</dbReference>
<dbReference type="GO" id="GO:0000105">
    <property type="term" value="P:L-histidine biosynthetic process"/>
    <property type="evidence" value="ECO:0007669"/>
    <property type="project" value="UniProtKB-UniRule"/>
</dbReference>
<dbReference type="CDD" id="cd11534">
    <property type="entry name" value="NTP-PPase_HisIE_like"/>
    <property type="match status" value="1"/>
</dbReference>
<dbReference type="FunFam" id="1.10.287.1080:FF:000002">
    <property type="entry name" value="Histidine biosynthesis bifunctional protein HisIE"/>
    <property type="match status" value="1"/>
</dbReference>
<dbReference type="Gene3D" id="1.10.287.1080">
    <property type="entry name" value="MazG-like"/>
    <property type="match status" value="1"/>
</dbReference>
<dbReference type="HAMAP" id="MF_01020">
    <property type="entry name" value="HisE"/>
    <property type="match status" value="1"/>
</dbReference>
<dbReference type="InterPro" id="IPR008179">
    <property type="entry name" value="HisE"/>
</dbReference>
<dbReference type="InterPro" id="IPR021130">
    <property type="entry name" value="PRib-ATP_PPHydrolase-like"/>
</dbReference>
<dbReference type="NCBIfam" id="TIGR03188">
    <property type="entry name" value="histidine_hisI"/>
    <property type="match status" value="1"/>
</dbReference>
<dbReference type="NCBIfam" id="NF001611">
    <property type="entry name" value="PRK00400.1-3"/>
    <property type="match status" value="1"/>
</dbReference>
<dbReference type="NCBIfam" id="NF001613">
    <property type="entry name" value="PRK00400.1-5"/>
    <property type="match status" value="1"/>
</dbReference>
<dbReference type="PANTHER" id="PTHR42945">
    <property type="entry name" value="HISTIDINE BIOSYNTHESIS BIFUNCTIONAL PROTEIN"/>
    <property type="match status" value="1"/>
</dbReference>
<dbReference type="PANTHER" id="PTHR42945:SF1">
    <property type="entry name" value="HISTIDINE BIOSYNTHESIS BIFUNCTIONAL PROTEIN HIS7"/>
    <property type="match status" value="1"/>
</dbReference>
<dbReference type="Pfam" id="PF01503">
    <property type="entry name" value="PRA-PH"/>
    <property type="match status" value="1"/>
</dbReference>
<dbReference type="SUPFAM" id="SSF101386">
    <property type="entry name" value="all-alpha NTP pyrophosphatases"/>
    <property type="match status" value="1"/>
</dbReference>
<organism>
    <name type="scientific">Cereibacter sphaeroides (strain ATCC 17023 / DSM 158 / JCM 6121 / CCUG 31486 / LMG 2827 / NBRC 12203 / NCIMB 8253 / ATH 2.4.1.)</name>
    <name type="common">Rhodobacter sphaeroides</name>
    <dbReference type="NCBI Taxonomy" id="272943"/>
    <lineage>
        <taxon>Bacteria</taxon>
        <taxon>Pseudomonadati</taxon>
        <taxon>Pseudomonadota</taxon>
        <taxon>Alphaproteobacteria</taxon>
        <taxon>Rhodobacterales</taxon>
        <taxon>Paracoccaceae</taxon>
        <taxon>Cereibacter</taxon>
    </lineage>
</organism>
<name>HIS2_CERS4</name>
<sequence length="103" mass="10900">MTVLERLAATVEARKGADPDSSWTAKLFAKGPEKCAEKFGEEAVEAIIEAVRGDRAKLASEAADVLYHLLVMLAARDVTLAEVMAVLEAREGTSGIAEKAGRG</sequence>
<proteinExistence type="inferred from homology"/>
<evidence type="ECO:0000250" key="1"/>
<evidence type="ECO:0000305" key="2"/>